<dbReference type="EC" id="3.4.22.-" evidence="3"/>
<dbReference type="EMBL" id="AL606590">
    <property type="protein sequence ID" value="CAD40026.2"/>
    <property type="molecule type" value="Genomic_DNA"/>
</dbReference>
<dbReference type="EMBL" id="AP008210">
    <property type="status" value="NOT_ANNOTATED_CDS"/>
    <property type="molecule type" value="Genomic_DNA"/>
</dbReference>
<dbReference type="EMBL" id="AP014960">
    <property type="protein sequence ID" value="BAS88099.1"/>
    <property type="molecule type" value="Genomic_DNA"/>
</dbReference>
<dbReference type="EMBL" id="CM000141">
    <property type="protein sequence ID" value="EAZ29764.1"/>
    <property type="molecule type" value="Genomic_DNA"/>
</dbReference>
<dbReference type="SMR" id="Q7XWK5"/>
<dbReference type="FunCoup" id="Q7XWK5">
    <property type="interactions" value="588"/>
</dbReference>
<dbReference type="STRING" id="39947.Q7XWK5"/>
<dbReference type="MEROPS" id="C01.104"/>
<dbReference type="PaxDb" id="39947-Q7XWK5"/>
<dbReference type="EnsemblPlants" id="Os04t0206300-00">
    <property type="protein sequence ID" value="Os04t0206300-00"/>
    <property type="gene ID" value="Os04g0206300"/>
</dbReference>
<dbReference type="GeneID" id="107276017"/>
<dbReference type="Gramene" id="Os04t0206300-00">
    <property type="protein sequence ID" value="Os04t0206300-00"/>
    <property type="gene ID" value="Os04g0206300"/>
</dbReference>
<dbReference type="KEGG" id="osa:107276017"/>
<dbReference type="eggNOG" id="KOG1543">
    <property type="taxonomic scope" value="Eukaryota"/>
</dbReference>
<dbReference type="HOGENOM" id="CLU_012184_1_0_1"/>
<dbReference type="InParanoid" id="Q7XWK5"/>
<dbReference type="OMA" id="IYFEPRC"/>
<dbReference type="OrthoDB" id="678493at2759"/>
<dbReference type="Proteomes" id="UP000000763">
    <property type="component" value="Chromosome 4"/>
</dbReference>
<dbReference type="Proteomes" id="UP000007752">
    <property type="component" value="Chromosome 4"/>
</dbReference>
<dbReference type="Proteomes" id="UP000059680">
    <property type="component" value="Chromosome 4"/>
</dbReference>
<dbReference type="GO" id="GO:0005615">
    <property type="term" value="C:extracellular space"/>
    <property type="evidence" value="ECO:0000318"/>
    <property type="project" value="GO_Central"/>
</dbReference>
<dbReference type="GO" id="GO:0005764">
    <property type="term" value="C:lysosome"/>
    <property type="evidence" value="ECO:0000318"/>
    <property type="project" value="GO_Central"/>
</dbReference>
<dbReference type="GO" id="GO:0010282">
    <property type="term" value="C:senescence-associated vacuole"/>
    <property type="evidence" value="ECO:0000250"/>
    <property type="project" value="UniProtKB"/>
</dbReference>
<dbReference type="GO" id="GO:0004197">
    <property type="term" value="F:cysteine-type endopeptidase activity"/>
    <property type="evidence" value="ECO:0000318"/>
    <property type="project" value="GO_Central"/>
</dbReference>
<dbReference type="GO" id="GO:0010150">
    <property type="term" value="P:leaf senescence"/>
    <property type="evidence" value="ECO:0000270"/>
    <property type="project" value="UniProtKB"/>
</dbReference>
<dbReference type="GO" id="GO:0010623">
    <property type="term" value="P:programmed cell death involved in cell development"/>
    <property type="evidence" value="ECO:0000250"/>
    <property type="project" value="UniProtKB"/>
</dbReference>
<dbReference type="GO" id="GO:0051603">
    <property type="term" value="P:proteolysis involved in protein catabolic process"/>
    <property type="evidence" value="ECO:0000318"/>
    <property type="project" value="GO_Central"/>
</dbReference>
<dbReference type="GO" id="GO:0009737">
    <property type="term" value="P:response to abscisic acid"/>
    <property type="evidence" value="ECO:0000270"/>
    <property type="project" value="UniProtKB"/>
</dbReference>
<dbReference type="GO" id="GO:0009723">
    <property type="term" value="P:response to ethylene"/>
    <property type="evidence" value="ECO:0000270"/>
    <property type="project" value="UniProtKB"/>
</dbReference>
<dbReference type="GO" id="GO:0009739">
    <property type="term" value="P:response to gibberellin"/>
    <property type="evidence" value="ECO:0000270"/>
    <property type="project" value="UniProtKB"/>
</dbReference>
<dbReference type="CDD" id="cd02248">
    <property type="entry name" value="Peptidase_C1A"/>
    <property type="match status" value="1"/>
</dbReference>
<dbReference type="FunFam" id="3.90.70.10:FF:000023">
    <property type="entry name" value="Senescence-specific cysteine protease SAG39"/>
    <property type="match status" value="1"/>
</dbReference>
<dbReference type="Gene3D" id="3.90.70.10">
    <property type="entry name" value="Cysteine proteinases"/>
    <property type="match status" value="1"/>
</dbReference>
<dbReference type="InterPro" id="IPR038765">
    <property type="entry name" value="Papain-like_cys_pep_sf"/>
</dbReference>
<dbReference type="InterPro" id="IPR025661">
    <property type="entry name" value="Pept_asp_AS"/>
</dbReference>
<dbReference type="InterPro" id="IPR000169">
    <property type="entry name" value="Pept_cys_AS"/>
</dbReference>
<dbReference type="InterPro" id="IPR025660">
    <property type="entry name" value="Pept_his_AS"/>
</dbReference>
<dbReference type="InterPro" id="IPR013128">
    <property type="entry name" value="Peptidase_C1A"/>
</dbReference>
<dbReference type="InterPro" id="IPR000668">
    <property type="entry name" value="Peptidase_C1A_C"/>
</dbReference>
<dbReference type="InterPro" id="IPR039417">
    <property type="entry name" value="Peptidase_C1A_papain-like"/>
</dbReference>
<dbReference type="InterPro" id="IPR013201">
    <property type="entry name" value="Prot_inhib_I29"/>
</dbReference>
<dbReference type="PANTHER" id="PTHR12411">
    <property type="entry name" value="CYSTEINE PROTEASE FAMILY C1-RELATED"/>
    <property type="match status" value="1"/>
</dbReference>
<dbReference type="Pfam" id="PF08246">
    <property type="entry name" value="Inhibitor_I29"/>
    <property type="match status" value="1"/>
</dbReference>
<dbReference type="Pfam" id="PF00112">
    <property type="entry name" value="Peptidase_C1"/>
    <property type="match status" value="1"/>
</dbReference>
<dbReference type="PRINTS" id="PR00705">
    <property type="entry name" value="PAPAIN"/>
</dbReference>
<dbReference type="SMART" id="SM00848">
    <property type="entry name" value="Inhibitor_I29"/>
    <property type="match status" value="1"/>
</dbReference>
<dbReference type="SMART" id="SM00645">
    <property type="entry name" value="Pept_C1"/>
    <property type="match status" value="1"/>
</dbReference>
<dbReference type="SUPFAM" id="SSF54001">
    <property type="entry name" value="Cysteine proteinases"/>
    <property type="match status" value="1"/>
</dbReference>
<dbReference type="PROSITE" id="PS00640">
    <property type="entry name" value="THIOL_PROTEASE_ASN"/>
    <property type="match status" value="1"/>
</dbReference>
<dbReference type="PROSITE" id="PS00139">
    <property type="entry name" value="THIOL_PROTEASE_CYS"/>
    <property type="match status" value="1"/>
</dbReference>
<dbReference type="PROSITE" id="PS00639">
    <property type="entry name" value="THIOL_PROTEASE_HIS"/>
    <property type="match status" value="1"/>
</dbReference>
<feature type="signal peptide" evidence="5">
    <location>
        <begin position="1"/>
        <end position="23"/>
    </location>
</feature>
<feature type="chain" id="PRO_0000430525" description="Senescence-specific cysteine protease SAG39" evidence="5">
    <location>
        <begin position="24"/>
        <end position="339"/>
    </location>
</feature>
<feature type="active site" evidence="6">
    <location>
        <position position="147"/>
    </location>
</feature>
<feature type="active site" evidence="7">
    <location>
        <position position="282"/>
    </location>
</feature>
<feature type="active site" evidence="8">
    <location>
        <position position="303"/>
    </location>
</feature>
<feature type="disulfide bond" evidence="1">
    <location>
        <begin position="144"/>
        <end position="187"/>
    </location>
</feature>
<feature type="disulfide bond" evidence="2">
    <location>
        <begin position="178"/>
        <end position="220"/>
    </location>
</feature>
<feature type="disulfide bond" evidence="2">
    <location>
        <begin position="276"/>
        <end position="328"/>
    </location>
</feature>
<sequence length="339" mass="36872">MAMAKALLFAILGCLCLCSAVLAARELSDDAAMAARHERWMAQYGRVYRDDAEKARRFEVFKANVAFIESFNAGNHNFWLGVNQFADLTNDEFRWMKTNKGFIPSTTRVPTGFRYENVNIDALPATVDWRTKGAVTPIKDQGQCGCCWAFSAVAAMEGIVKLSTGKLISLSEQELVDCDVHGEDQGCEGGLMDDAFKFIIKNGGLTTESNYPYAAADDKCKSVSNSVASIKGYEDVPANNEAALMKAVANQPVSVAVDGGDMTFQFYKGGVMTGSCGTDLDHGIVAIGYGKASDGTKYWLLKNSWGTTWGENGFLRMEKDISDKRGMCGLAMEPSYPTA</sequence>
<accession>Q7XWK5</accession>
<accession>A0A0P0W7K3</accession>
<protein>
    <recommendedName>
        <fullName evidence="11">Senescence-specific cysteine protease SAG39</fullName>
        <ecNumber evidence="3">3.4.22.-</ecNumber>
    </recommendedName>
    <alternativeName>
        <fullName evidence="11">Cysteine proteinase SAG39</fullName>
    </alternativeName>
    <alternativeName>
        <fullName evidence="10">Protein SENESCENCE-ASSOCIATED GENE 39</fullName>
    </alternativeName>
</protein>
<keyword id="KW-1015">Disulfide bond</keyword>
<keyword id="KW-0378">Hydrolase</keyword>
<keyword id="KW-0645">Protease</keyword>
<keyword id="KW-1185">Reference proteome</keyword>
<keyword id="KW-0732">Signal</keyword>
<keyword id="KW-0788">Thiol protease</keyword>
<keyword id="KW-0926">Vacuole</keyword>
<reference key="1">
    <citation type="journal article" date="2002" name="Nature">
        <title>Sequence and analysis of rice chromosome 4.</title>
        <authorList>
            <person name="Feng Q."/>
            <person name="Zhang Y."/>
            <person name="Hao P."/>
            <person name="Wang S."/>
            <person name="Fu G."/>
            <person name="Huang Y."/>
            <person name="Li Y."/>
            <person name="Zhu J."/>
            <person name="Liu Y."/>
            <person name="Hu X."/>
            <person name="Jia P."/>
            <person name="Zhang Y."/>
            <person name="Zhao Q."/>
            <person name="Ying K."/>
            <person name="Yu S."/>
            <person name="Tang Y."/>
            <person name="Weng Q."/>
            <person name="Zhang L."/>
            <person name="Lu Y."/>
            <person name="Mu J."/>
            <person name="Lu Y."/>
            <person name="Zhang L.S."/>
            <person name="Yu Z."/>
            <person name="Fan D."/>
            <person name="Liu X."/>
            <person name="Lu T."/>
            <person name="Li C."/>
            <person name="Wu Y."/>
            <person name="Sun T."/>
            <person name="Lei H."/>
            <person name="Li T."/>
            <person name="Hu H."/>
            <person name="Guan J."/>
            <person name="Wu M."/>
            <person name="Zhang R."/>
            <person name="Zhou B."/>
            <person name="Chen Z."/>
            <person name="Chen L."/>
            <person name="Jin Z."/>
            <person name="Wang R."/>
            <person name="Yin H."/>
            <person name="Cai Z."/>
            <person name="Ren S."/>
            <person name="Lv G."/>
            <person name="Gu W."/>
            <person name="Zhu G."/>
            <person name="Tu Y."/>
            <person name="Jia J."/>
            <person name="Zhang Y."/>
            <person name="Chen J."/>
            <person name="Kang H."/>
            <person name="Chen X."/>
            <person name="Shao C."/>
            <person name="Sun Y."/>
            <person name="Hu Q."/>
            <person name="Zhang X."/>
            <person name="Zhang W."/>
            <person name="Wang L."/>
            <person name="Ding C."/>
            <person name="Sheng H."/>
            <person name="Gu J."/>
            <person name="Chen S."/>
            <person name="Ni L."/>
            <person name="Zhu F."/>
            <person name="Chen W."/>
            <person name="Lan L."/>
            <person name="Lai Y."/>
            <person name="Cheng Z."/>
            <person name="Gu M."/>
            <person name="Jiang J."/>
            <person name="Li J."/>
            <person name="Hong G."/>
            <person name="Xue Y."/>
            <person name="Han B."/>
        </authorList>
    </citation>
    <scope>NUCLEOTIDE SEQUENCE [LARGE SCALE GENOMIC DNA]</scope>
    <source>
        <strain>cv. Nipponbare</strain>
    </source>
</reference>
<reference key="2">
    <citation type="journal article" date="2005" name="Nature">
        <title>The map-based sequence of the rice genome.</title>
        <authorList>
            <consortium name="International rice genome sequencing project (IRGSP)"/>
        </authorList>
    </citation>
    <scope>NUCLEOTIDE SEQUENCE [LARGE SCALE GENOMIC DNA]</scope>
    <source>
        <strain>cv. Nipponbare</strain>
    </source>
</reference>
<reference key="3">
    <citation type="journal article" date="2008" name="Nucleic Acids Res.">
        <title>The rice annotation project database (RAP-DB): 2008 update.</title>
        <authorList>
            <consortium name="The rice annotation project (RAP)"/>
        </authorList>
    </citation>
    <scope>GENOME REANNOTATION</scope>
    <source>
        <strain>cv. Nipponbare</strain>
    </source>
</reference>
<reference key="4">
    <citation type="journal article" date="2013" name="Rice">
        <title>Improvement of the Oryza sativa Nipponbare reference genome using next generation sequence and optical map data.</title>
        <authorList>
            <person name="Kawahara Y."/>
            <person name="de la Bastide M."/>
            <person name="Hamilton J.P."/>
            <person name="Kanamori H."/>
            <person name="McCombie W.R."/>
            <person name="Ouyang S."/>
            <person name="Schwartz D.C."/>
            <person name="Tanaka T."/>
            <person name="Wu J."/>
            <person name="Zhou S."/>
            <person name="Childs K.L."/>
            <person name="Davidson R.M."/>
            <person name="Lin H."/>
            <person name="Quesada-Ocampo L."/>
            <person name="Vaillancourt B."/>
            <person name="Sakai H."/>
            <person name="Lee S.S."/>
            <person name="Kim J."/>
            <person name="Numa H."/>
            <person name="Itoh T."/>
            <person name="Buell C.R."/>
            <person name="Matsumoto T."/>
        </authorList>
    </citation>
    <scope>GENOME REANNOTATION</scope>
    <source>
        <strain>cv. Nipponbare</strain>
    </source>
</reference>
<reference key="5">
    <citation type="journal article" date="2005" name="PLoS Biol.">
        <title>The genomes of Oryza sativa: a history of duplications.</title>
        <authorList>
            <person name="Yu J."/>
            <person name="Wang J."/>
            <person name="Lin W."/>
            <person name="Li S."/>
            <person name="Li H."/>
            <person name="Zhou J."/>
            <person name="Ni P."/>
            <person name="Dong W."/>
            <person name="Hu S."/>
            <person name="Zeng C."/>
            <person name="Zhang J."/>
            <person name="Zhang Y."/>
            <person name="Li R."/>
            <person name="Xu Z."/>
            <person name="Li S."/>
            <person name="Li X."/>
            <person name="Zheng H."/>
            <person name="Cong L."/>
            <person name="Lin L."/>
            <person name="Yin J."/>
            <person name="Geng J."/>
            <person name="Li G."/>
            <person name="Shi J."/>
            <person name="Liu J."/>
            <person name="Lv H."/>
            <person name="Li J."/>
            <person name="Wang J."/>
            <person name="Deng Y."/>
            <person name="Ran L."/>
            <person name="Shi X."/>
            <person name="Wang X."/>
            <person name="Wu Q."/>
            <person name="Li C."/>
            <person name="Ren X."/>
            <person name="Wang J."/>
            <person name="Wang X."/>
            <person name="Li D."/>
            <person name="Liu D."/>
            <person name="Zhang X."/>
            <person name="Ji Z."/>
            <person name="Zhao W."/>
            <person name="Sun Y."/>
            <person name="Zhang Z."/>
            <person name="Bao J."/>
            <person name="Han Y."/>
            <person name="Dong L."/>
            <person name="Ji J."/>
            <person name="Chen P."/>
            <person name="Wu S."/>
            <person name="Liu J."/>
            <person name="Xiao Y."/>
            <person name="Bu D."/>
            <person name="Tan J."/>
            <person name="Yang L."/>
            <person name="Ye C."/>
            <person name="Zhang J."/>
            <person name="Xu J."/>
            <person name="Zhou Y."/>
            <person name="Yu Y."/>
            <person name="Zhang B."/>
            <person name="Zhuang S."/>
            <person name="Wei H."/>
            <person name="Liu B."/>
            <person name="Lei M."/>
            <person name="Yu H."/>
            <person name="Li Y."/>
            <person name="Xu H."/>
            <person name="Wei S."/>
            <person name="He X."/>
            <person name="Fang L."/>
            <person name="Zhang Z."/>
            <person name="Zhang Y."/>
            <person name="Huang X."/>
            <person name="Su Z."/>
            <person name="Tong W."/>
            <person name="Li J."/>
            <person name="Tong Z."/>
            <person name="Li S."/>
            <person name="Ye J."/>
            <person name="Wang L."/>
            <person name="Fang L."/>
            <person name="Lei T."/>
            <person name="Chen C.-S."/>
            <person name="Chen H.-C."/>
            <person name="Xu Z."/>
            <person name="Li H."/>
            <person name="Huang H."/>
            <person name="Zhang F."/>
            <person name="Xu H."/>
            <person name="Li N."/>
            <person name="Zhao C."/>
            <person name="Li S."/>
            <person name="Dong L."/>
            <person name="Huang Y."/>
            <person name="Li L."/>
            <person name="Xi Y."/>
            <person name="Qi Q."/>
            <person name="Li W."/>
            <person name="Zhang B."/>
            <person name="Hu W."/>
            <person name="Zhang Y."/>
            <person name="Tian X."/>
            <person name="Jiao Y."/>
            <person name="Liang X."/>
            <person name="Jin J."/>
            <person name="Gao L."/>
            <person name="Zheng W."/>
            <person name="Hao B."/>
            <person name="Liu S.-M."/>
            <person name="Wang W."/>
            <person name="Yuan L."/>
            <person name="Cao M."/>
            <person name="McDermott J."/>
            <person name="Samudrala R."/>
            <person name="Wang J."/>
            <person name="Wong G.K.-S."/>
            <person name="Yang H."/>
        </authorList>
    </citation>
    <scope>NUCLEOTIDE SEQUENCE [LARGE SCALE GENOMIC DNA]</scope>
    <source>
        <strain>cv. Nipponbare</strain>
    </source>
</reference>
<reference key="6">
    <citation type="journal article" date="2010" name="Plant Physiol.">
        <title>Identification and application of a rice senescence-associated promoter.</title>
        <authorList>
            <person name="Liu L."/>
            <person name="Zhou Y."/>
            <person name="Szczerba M.W."/>
            <person name="Li X."/>
            <person name="Lin Y."/>
        </authorList>
    </citation>
    <scope>TISSUE SPECIFICITY</scope>
    <scope>INDUCTION BY SENESCENCE; ETHYLENE; GIBBERELLIN AND ABSCISIC ACID</scope>
    <scope>DEVELOPMENTAL STAGE</scope>
    <scope>BIOTECHNOLOGY</scope>
    <source>
        <strain>cv. Nipponbare</strain>
    </source>
</reference>
<gene>
    <name evidence="10" type="primary">SAG39</name>
    <name evidence="11" type="ordered locus">Os04g0206300</name>
    <name evidence="13" type="ORF">OsJ_13822</name>
    <name evidence="12" type="ORF">OSJNBa0052O21.11</name>
</gene>
<comment type="function">
    <text evidence="4">Cysteine protease that may have a developmental senescence specific cell death function during apoptosis, heavy metal detoxification, and hypersensitive response.</text>
</comment>
<comment type="subcellular location">
    <subcellularLocation>
        <location evidence="4">Vacuole</location>
    </subcellularLocation>
    <text evidence="4">Localized in senescence-associated vacuoles (SAVs) with intense proteolytic activity that develop in the peripheral cytoplasm of mesophyll and guard cells.</text>
</comment>
<comment type="tissue specificity">
    <text evidence="9">Low expression in mature leaves.</text>
</comment>
<comment type="developmental stage">
    <text evidence="9">Senescent tissues specific expression.</text>
</comment>
<comment type="induction">
    <text evidence="9">Accumulates progressively during senescence with maximum levels at late senescence stages. Induced by abscisic acid (ABA), ethylene (ACC) and gibberellin (GA(3)).</text>
</comment>
<comment type="biotechnology">
    <text evidence="10">The senescence specific expression can be use to monitor cytokinin synthases (e.g. IPT) in order to promote yield and early maturation of panicles, and to delay senescence.</text>
</comment>
<comment type="similarity">
    <text evidence="6 7 8">Belongs to the peptidase C1 family.</text>
</comment>
<proteinExistence type="evidence at transcript level"/>
<name>SAG39_ORYSJ</name>
<evidence type="ECO:0000250" key="1">
    <source>
        <dbReference type="UniProtKB" id="P07858"/>
    </source>
</evidence>
<evidence type="ECO:0000250" key="2">
    <source>
        <dbReference type="UniProtKB" id="P25250"/>
    </source>
</evidence>
<evidence type="ECO:0000250" key="3">
    <source>
        <dbReference type="UniProtKB" id="P80884"/>
    </source>
</evidence>
<evidence type="ECO:0000250" key="4">
    <source>
        <dbReference type="UniProtKB" id="Q9FJ47"/>
    </source>
</evidence>
<evidence type="ECO:0000255" key="5"/>
<evidence type="ECO:0000255" key="6">
    <source>
        <dbReference type="PROSITE-ProRule" id="PRU10088"/>
    </source>
</evidence>
<evidence type="ECO:0000255" key="7">
    <source>
        <dbReference type="PROSITE-ProRule" id="PRU10089"/>
    </source>
</evidence>
<evidence type="ECO:0000255" key="8">
    <source>
        <dbReference type="PROSITE-ProRule" id="PRU10090"/>
    </source>
</evidence>
<evidence type="ECO:0000269" key="9">
    <source>
    </source>
</evidence>
<evidence type="ECO:0000303" key="10">
    <source>
    </source>
</evidence>
<evidence type="ECO:0000305" key="11"/>
<evidence type="ECO:0000312" key="12">
    <source>
        <dbReference type="EMBL" id="CAD40026.2"/>
    </source>
</evidence>
<evidence type="ECO:0000312" key="13">
    <source>
        <dbReference type="EMBL" id="EAZ29764.1"/>
    </source>
</evidence>
<organism>
    <name type="scientific">Oryza sativa subsp. japonica</name>
    <name type="common">Rice</name>
    <dbReference type="NCBI Taxonomy" id="39947"/>
    <lineage>
        <taxon>Eukaryota</taxon>
        <taxon>Viridiplantae</taxon>
        <taxon>Streptophyta</taxon>
        <taxon>Embryophyta</taxon>
        <taxon>Tracheophyta</taxon>
        <taxon>Spermatophyta</taxon>
        <taxon>Magnoliopsida</taxon>
        <taxon>Liliopsida</taxon>
        <taxon>Poales</taxon>
        <taxon>Poaceae</taxon>
        <taxon>BOP clade</taxon>
        <taxon>Oryzoideae</taxon>
        <taxon>Oryzeae</taxon>
        <taxon>Oryzinae</taxon>
        <taxon>Oryza</taxon>
        <taxon>Oryza sativa</taxon>
    </lineage>
</organism>